<gene>
    <name evidence="3" type="primary">INSIG2</name>
</gene>
<accession>Q6PQZ3</accession>
<accession>Q5Y8D7</accession>
<organism>
    <name type="scientific">Sus scrofa</name>
    <name type="common">Pig</name>
    <dbReference type="NCBI Taxonomy" id="9823"/>
    <lineage>
        <taxon>Eukaryota</taxon>
        <taxon>Metazoa</taxon>
        <taxon>Chordata</taxon>
        <taxon>Craniata</taxon>
        <taxon>Vertebrata</taxon>
        <taxon>Euteleostomi</taxon>
        <taxon>Mammalia</taxon>
        <taxon>Eutheria</taxon>
        <taxon>Laurasiatheria</taxon>
        <taxon>Artiodactyla</taxon>
        <taxon>Suina</taxon>
        <taxon>Suidae</taxon>
        <taxon>Sus</taxon>
    </lineage>
</organism>
<dbReference type="EMBL" id="AY585269">
    <property type="protein sequence ID" value="AAS99653.2"/>
    <property type="molecule type" value="mRNA"/>
</dbReference>
<dbReference type="EMBL" id="AY647990">
    <property type="protein sequence ID" value="AAU88197.1"/>
    <property type="molecule type" value="Genomic_DNA"/>
</dbReference>
<dbReference type="RefSeq" id="NP_001123440.1">
    <property type="nucleotide sequence ID" value="NM_001129968.1"/>
</dbReference>
<dbReference type="RefSeq" id="XP_020930217.1">
    <property type="nucleotide sequence ID" value="XM_021074558.1"/>
</dbReference>
<dbReference type="RefSeq" id="XP_020930218.1">
    <property type="nucleotide sequence ID" value="XM_021074559.1"/>
</dbReference>
<dbReference type="RefSeq" id="XP_020930219.1">
    <property type="nucleotide sequence ID" value="XM_021074560.1"/>
</dbReference>
<dbReference type="RefSeq" id="XP_020930220.1">
    <property type="nucleotide sequence ID" value="XM_021074561.1"/>
</dbReference>
<dbReference type="RefSeq" id="XP_020930221.1">
    <property type="nucleotide sequence ID" value="XM_021074562.1"/>
</dbReference>
<dbReference type="SMR" id="Q6PQZ3"/>
<dbReference type="FunCoup" id="Q6PQZ3">
    <property type="interactions" value="111"/>
</dbReference>
<dbReference type="STRING" id="9823.ENSSSCP00000041204"/>
<dbReference type="Ensembl" id="ENSSSCT00000056159.3">
    <property type="protein sequence ID" value="ENSSSCP00000041204.1"/>
    <property type="gene ID" value="ENSSSCG00000036229.3"/>
</dbReference>
<dbReference type="Ensembl" id="ENSSSCT00025070118.1">
    <property type="protein sequence ID" value="ENSSSCP00025030255.1"/>
    <property type="gene ID" value="ENSSSCG00025051296.1"/>
</dbReference>
<dbReference type="Ensembl" id="ENSSSCT00030026570.1">
    <property type="protein sequence ID" value="ENSSSCP00030011872.1"/>
    <property type="gene ID" value="ENSSSCG00030019225.1"/>
</dbReference>
<dbReference type="Ensembl" id="ENSSSCT00040056038.1">
    <property type="protein sequence ID" value="ENSSSCP00040023298.1"/>
    <property type="gene ID" value="ENSSSCG00040041867.1"/>
</dbReference>
<dbReference type="Ensembl" id="ENSSSCT00050046003.1">
    <property type="protein sequence ID" value="ENSSSCP00050018920.1"/>
    <property type="gene ID" value="ENSSSCG00050034307.1"/>
</dbReference>
<dbReference type="Ensembl" id="ENSSSCT00055039458.1">
    <property type="protein sequence ID" value="ENSSSCP00055031387.1"/>
    <property type="gene ID" value="ENSSSCG00055020111.1"/>
</dbReference>
<dbReference type="Ensembl" id="ENSSSCT00060002502.1">
    <property type="protein sequence ID" value="ENSSSCP00060000793.1"/>
    <property type="gene ID" value="ENSSSCG00060002044.1"/>
</dbReference>
<dbReference type="Ensembl" id="ENSSSCT00065033210.1">
    <property type="protein sequence ID" value="ENSSSCP00065013712.1"/>
    <property type="gene ID" value="ENSSSCG00065024855.1"/>
</dbReference>
<dbReference type="Ensembl" id="ENSSSCT00070004521.1">
    <property type="protein sequence ID" value="ENSSSCP00070003726.1"/>
    <property type="gene ID" value="ENSSSCG00070002417.1"/>
</dbReference>
<dbReference type="Ensembl" id="ENSSSCT00070004531.1">
    <property type="protein sequence ID" value="ENSSSCP00070003733.1"/>
    <property type="gene ID" value="ENSSSCG00070002417.1"/>
</dbReference>
<dbReference type="Ensembl" id="ENSSSCT00070004540.1">
    <property type="protein sequence ID" value="ENSSSCP00070003740.1"/>
    <property type="gene ID" value="ENSSSCG00070002417.1"/>
</dbReference>
<dbReference type="Ensembl" id="ENSSSCT00070004550.1">
    <property type="protein sequence ID" value="ENSSSCP00070003749.1"/>
    <property type="gene ID" value="ENSSSCG00070002417.1"/>
</dbReference>
<dbReference type="Ensembl" id="ENSSSCT00090009778">
    <property type="protein sequence ID" value="ENSSSCP00090005942"/>
    <property type="gene ID" value="ENSSSCG00090005583"/>
</dbReference>
<dbReference type="Ensembl" id="ENSSSCT00105025385">
    <property type="protein sequence ID" value="ENSSSCP00105018012"/>
    <property type="gene ID" value="ENSSSCG00105012998"/>
</dbReference>
<dbReference type="Ensembl" id="ENSSSCT00110031942">
    <property type="protein sequence ID" value="ENSSSCP00110021627"/>
    <property type="gene ID" value="ENSSSCG00110016754"/>
</dbReference>
<dbReference type="Ensembl" id="ENSSSCT00115010953">
    <property type="protein sequence ID" value="ENSSSCP00115010315"/>
    <property type="gene ID" value="ENSSSCG00115006338"/>
</dbReference>
<dbReference type="Ensembl" id="ENSSSCT00130053302">
    <property type="protein sequence ID" value="ENSSSCP00130037974"/>
    <property type="gene ID" value="ENSSSCG00130027393"/>
</dbReference>
<dbReference type="GeneID" id="100170127"/>
<dbReference type="KEGG" id="ssc:100170127"/>
<dbReference type="CTD" id="51141"/>
<dbReference type="VGNC" id="VGNC:103970">
    <property type="gene designation" value="INSIG2"/>
</dbReference>
<dbReference type="GeneTree" id="ENSGT00580000081600"/>
<dbReference type="InParanoid" id="Q6PQZ3"/>
<dbReference type="OMA" id="SKKCGPY"/>
<dbReference type="OrthoDB" id="205546at2759"/>
<dbReference type="Proteomes" id="UP000008227">
    <property type="component" value="Chromosome 15"/>
</dbReference>
<dbReference type="Proteomes" id="UP000314985">
    <property type="component" value="Chromosome 15"/>
</dbReference>
<dbReference type="Proteomes" id="UP000694570">
    <property type="component" value="Unplaced"/>
</dbReference>
<dbReference type="Proteomes" id="UP000694571">
    <property type="component" value="Unplaced"/>
</dbReference>
<dbReference type="Proteomes" id="UP000694720">
    <property type="component" value="Unplaced"/>
</dbReference>
<dbReference type="Proteomes" id="UP000694722">
    <property type="component" value="Unplaced"/>
</dbReference>
<dbReference type="Proteomes" id="UP000694723">
    <property type="component" value="Unplaced"/>
</dbReference>
<dbReference type="Proteomes" id="UP000694724">
    <property type="component" value="Unplaced"/>
</dbReference>
<dbReference type="Proteomes" id="UP000694725">
    <property type="component" value="Unplaced"/>
</dbReference>
<dbReference type="Proteomes" id="UP000694726">
    <property type="component" value="Unplaced"/>
</dbReference>
<dbReference type="Proteomes" id="UP000694727">
    <property type="component" value="Unplaced"/>
</dbReference>
<dbReference type="Proteomes" id="UP000694728">
    <property type="component" value="Unplaced"/>
</dbReference>
<dbReference type="Bgee" id="ENSSSCG00000036229">
    <property type="expression patterns" value="Expressed in metanephros cortex and 43 other cell types or tissues"/>
</dbReference>
<dbReference type="ExpressionAtlas" id="Q6PQZ3">
    <property type="expression patterns" value="baseline and differential"/>
</dbReference>
<dbReference type="GO" id="GO:0005783">
    <property type="term" value="C:endoplasmic reticulum"/>
    <property type="evidence" value="ECO:0000318"/>
    <property type="project" value="GO_Central"/>
</dbReference>
<dbReference type="GO" id="GO:0032937">
    <property type="term" value="C:SREBP-SCAP-Insig complex"/>
    <property type="evidence" value="ECO:0000318"/>
    <property type="project" value="GO_Central"/>
</dbReference>
<dbReference type="GO" id="GO:0008142">
    <property type="term" value="F:oxysterol binding"/>
    <property type="evidence" value="ECO:0000250"/>
    <property type="project" value="UniProtKB"/>
</dbReference>
<dbReference type="GO" id="GO:0140311">
    <property type="term" value="F:protein sequestering activity"/>
    <property type="evidence" value="ECO:0007669"/>
    <property type="project" value="Ensembl"/>
</dbReference>
<dbReference type="GO" id="GO:0032869">
    <property type="term" value="P:cellular response to insulin stimulus"/>
    <property type="evidence" value="ECO:0000318"/>
    <property type="project" value="GO_Central"/>
</dbReference>
<dbReference type="GO" id="GO:0006695">
    <property type="term" value="P:cholesterol biosynthetic process"/>
    <property type="evidence" value="ECO:0000250"/>
    <property type="project" value="UniProtKB"/>
</dbReference>
<dbReference type="GO" id="GO:0060363">
    <property type="term" value="P:cranial suture morphogenesis"/>
    <property type="evidence" value="ECO:0007669"/>
    <property type="project" value="Ensembl"/>
</dbReference>
<dbReference type="GO" id="GO:0042472">
    <property type="term" value="P:inner ear morphogenesis"/>
    <property type="evidence" value="ECO:0007669"/>
    <property type="project" value="Ensembl"/>
</dbReference>
<dbReference type="GO" id="GO:0042474">
    <property type="term" value="P:middle ear morphogenesis"/>
    <property type="evidence" value="ECO:0007669"/>
    <property type="project" value="Ensembl"/>
</dbReference>
<dbReference type="GO" id="GO:0045717">
    <property type="term" value="P:negative regulation of fatty acid biosynthetic process"/>
    <property type="evidence" value="ECO:0007669"/>
    <property type="project" value="Ensembl"/>
</dbReference>
<dbReference type="GO" id="GO:0010894">
    <property type="term" value="P:negative regulation of steroid biosynthetic process"/>
    <property type="evidence" value="ECO:0007669"/>
    <property type="project" value="Ensembl"/>
</dbReference>
<dbReference type="GO" id="GO:0060021">
    <property type="term" value="P:roof of mouth development"/>
    <property type="evidence" value="ECO:0007669"/>
    <property type="project" value="Ensembl"/>
</dbReference>
<dbReference type="GO" id="GO:0032933">
    <property type="term" value="P:SREBP signaling pathway"/>
    <property type="evidence" value="ECO:0000250"/>
    <property type="project" value="UniProtKB"/>
</dbReference>
<dbReference type="GO" id="GO:0036316">
    <property type="term" value="P:SREBP-SCAP complex retention in endoplasmic reticulum"/>
    <property type="evidence" value="ECO:0000250"/>
    <property type="project" value="UniProtKB"/>
</dbReference>
<dbReference type="GO" id="GO:0006641">
    <property type="term" value="P:triglyceride metabolic process"/>
    <property type="evidence" value="ECO:0007669"/>
    <property type="project" value="Ensembl"/>
</dbReference>
<dbReference type="InterPro" id="IPR025929">
    <property type="entry name" value="INSIG_fam"/>
</dbReference>
<dbReference type="PANTHER" id="PTHR15301">
    <property type="entry name" value="INSULIN-INDUCED GENE 1"/>
    <property type="match status" value="1"/>
</dbReference>
<dbReference type="PANTHER" id="PTHR15301:SF10">
    <property type="entry name" value="INSULIN-INDUCED GENE 2 PROTEIN"/>
    <property type="match status" value="1"/>
</dbReference>
<dbReference type="Pfam" id="PF07281">
    <property type="entry name" value="INSIG"/>
    <property type="match status" value="1"/>
</dbReference>
<feature type="chain" id="PRO_0000286799" description="Insulin-induced gene 2 protein">
    <location>
        <begin position="1"/>
        <end position="225"/>
    </location>
</feature>
<feature type="topological domain" description="Cytoplasmic" evidence="4">
    <location>
        <begin position="1"/>
        <end position="28"/>
    </location>
</feature>
<feature type="transmembrane region" description="Helical; Name=1" evidence="1">
    <location>
        <begin position="29"/>
        <end position="51"/>
    </location>
</feature>
<feature type="topological domain" description="Lumenal" evidence="4">
    <location>
        <begin position="52"/>
        <end position="70"/>
    </location>
</feature>
<feature type="transmembrane region" description="Helical; Name=2" evidence="1">
    <location>
        <begin position="71"/>
        <end position="88"/>
    </location>
</feature>
<feature type="topological domain" description="Cytoplasmic" evidence="4">
    <location>
        <begin position="89"/>
        <end position="103"/>
    </location>
</feature>
<feature type="transmembrane region" description="Helical; Name=3" evidence="1">
    <location>
        <begin position="104"/>
        <end position="126"/>
    </location>
</feature>
<feature type="topological domain" description="Lumenal" evidence="4">
    <location>
        <begin position="127"/>
        <end position="129"/>
    </location>
</feature>
<feature type="transmembrane region" description="Helical; Name=4" evidence="1">
    <location>
        <begin position="130"/>
        <end position="148"/>
    </location>
</feature>
<feature type="topological domain" description="Cytoplasmic" evidence="4">
    <location>
        <begin position="149"/>
        <end position="153"/>
    </location>
</feature>
<feature type="transmembrane region" description="Helical; Name=5" evidence="1">
    <location>
        <begin position="154"/>
        <end position="175"/>
    </location>
</feature>
<feature type="topological domain" description="Lumenal" evidence="4">
    <location>
        <begin position="176"/>
        <end position="189"/>
    </location>
</feature>
<feature type="transmembrane region" description="Helical; Name=6" evidence="1">
    <location>
        <begin position="190"/>
        <end position="207"/>
    </location>
</feature>
<feature type="topological domain" description="Cytoplasmic" evidence="4">
    <location>
        <begin position="208"/>
        <end position="225"/>
    </location>
</feature>
<feature type="short sequence motif" description="KxHxx" evidence="2">
    <location>
        <begin position="219"/>
        <end position="225"/>
    </location>
</feature>
<feature type="site" description="Required for the recognition of 25-hydroxycholesterol" evidence="2">
    <location>
        <position position="115"/>
    </location>
</feature>
<feature type="modified residue" description="Phosphoserine" evidence="2">
    <location>
        <position position="151"/>
    </location>
</feature>
<feature type="modified residue" description="Cysteine sulfenic acid (-SOH); alternate" evidence="2">
    <location>
        <position position="215"/>
    </location>
</feature>
<feature type="cross-link" description="Glycyl cysteine thioester (Cys-Gly) (interchain with G-Cter in ubiquitin); alternate" evidence="2">
    <location>
        <position position="215"/>
    </location>
</feature>
<proteinExistence type="evidence at transcript level"/>
<reference key="1">
    <citation type="journal article" date="2005" name="Anim. Genet.">
        <title>Sequencing and chromosome mapping of pig INSIG 2 and a related pseudogene.</title>
        <authorList>
            <person name="Qiu H."/>
            <person name="Xia T."/>
            <person name="Chen X.D."/>
            <person name="Feng S.Q."/>
            <person name="Gan L."/>
            <person name="Lei T."/>
            <person name="Peng Y."/>
            <person name="Zhang G.D."/>
            <person name="Nie T."/>
            <person name="Yue G.P."/>
            <person name="Zhao X.L."/>
            <person name="Yang Z.Q."/>
        </authorList>
    </citation>
    <scope>NUCLEOTIDE SEQUENCE [GENOMIC DNA / MRNA]</scope>
</reference>
<name>INSI2_PIG</name>
<keyword id="KW-0153">Cholesterol metabolism</keyword>
<keyword id="KW-0256">Endoplasmic reticulum</keyword>
<keyword id="KW-0443">Lipid metabolism</keyword>
<keyword id="KW-0446">Lipid-binding</keyword>
<keyword id="KW-0472">Membrane</keyword>
<keyword id="KW-0558">Oxidation</keyword>
<keyword id="KW-0597">Phosphoprotein</keyword>
<keyword id="KW-1185">Reference proteome</keyword>
<keyword id="KW-0753">Steroid metabolism</keyword>
<keyword id="KW-1207">Sterol metabolism</keyword>
<keyword id="KW-0882">Thioester bond</keyword>
<keyword id="KW-0812">Transmembrane</keyword>
<keyword id="KW-1133">Transmembrane helix</keyword>
<keyword id="KW-0832">Ubl conjugation</keyword>
<protein>
    <recommendedName>
        <fullName evidence="3">Insulin-induced gene 2 protein</fullName>
        <shortName evidence="3">INSIG-2</shortName>
    </recommendedName>
</protein>
<evidence type="ECO:0000250" key="1">
    <source>
        <dbReference type="UniProtKB" id="A1T557"/>
    </source>
</evidence>
<evidence type="ECO:0000250" key="2">
    <source>
        <dbReference type="UniProtKB" id="Q9Y5U4"/>
    </source>
</evidence>
<evidence type="ECO:0000303" key="3">
    <source>
    </source>
</evidence>
<evidence type="ECO:0000305" key="4"/>
<comment type="function">
    <text evidence="2">Oxysterol-binding protein that mediates feedback control of cholesterol synthesis by controlling both endoplasmic reticulum to Golgi transport of SCAP and degradation of HMGCR. Acts as a negative regulator of cholesterol biosynthesis by mediating the retention of the SCAP-SREBP complex in the endoplasmic reticulum, thereby blocking the processing of sterol regulatory element-binding proteins (SREBPs) SREBF1/SREBP1 and SREBF2/SREBP2. Binds oxysterol, including 22-hydroxycholesterol, 24-hydroxycholesterol, 25-hydroxycholesterol and 27-hydroxycholesterol, regulating interaction with SCAP and retention of the SCAP-SREBP complex in the endoplasmic reticulum. In presence of oxysterol, interacts with SCAP, retaining the SCAP-SREBP complex in the endoplasmic reticulum, thereby preventing SCAP from escorting SREBF1/SREBP1 and SREBF2/SREBP2 to the Golgi. Sterol deprivation or phosphorylation by PCK1 reduce oxysterol-binding, disrupting the interaction between INSIG2 and SCAP, thereby promoting Golgi transport of the SCAP-SREBP complex, followed by processing and nuclear translocation of SREBF1/SREBP1 and SREBF2/SREBP2. Also regulates cholesterol synthesis by regulating degradation of HMGCR: initiates the sterol-mediated ubiquitin-mediated endoplasmic reticulum-associated degradation (ERAD) of HMGCR via recruitment of the reductase to the ubiquitin ligase RNF139.</text>
</comment>
<comment type="subunit">
    <text evidence="2">Interacts with SCAP; interaction is direct and only takes place in the presence of sterols; it prevents interaction between SCAP and the coat protein complex II (COPII). Associates with the SCAP-SREBP complex (composed of SCAP and SREBF1/SREBP1 or SREBF2/SREBP2); association is mediated via its interaction with SCAP and only takes place in the presence of sterols. Interacts with RNF139. Interacts with RNF145.</text>
</comment>
<comment type="subcellular location">
    <subcellularLocation>
        <location evidence="2">Endoplasmic reticulum membrane</location>
        <topology evidence="2">Multi-pass membrane protein</topology>
    </subcellularLocation>
</comment>
<comment type="domain">
    <text evidence="2">Binds oxysterols in a pocket within their transmembrane domains and interacts with SCAP via transmembrane domains 3 and 4.</text>
</comment>
<comment type="domain">
    <text evidence="2">The KxHxx motif mediates association with the coatomer complex.</text>
</comment>
<comment type="PTM">
    <text evidence="2">Phosphorylation at Ser-151 by PCK1 reduces binding to oxysterol, disrupting the interaction between INSIG2 and SCAP, thereby promoting nuclear translocation of SREBP proteins (SREBF1/SREBP1 or SREBF2/SREBP2) and subsequent transcription of downstream lipogenesis-related genes.</text>
</comment>
<comment type="PTM">
    <text evidence="2">Polyubiquitinated by AMFR/gp78 at Cys-215 in some tissues such as adipose tissues, undifferentiated myoblasts and liver, leading to its degradation. In differentiated myotubes, Cys-215 oxidation prevents ubiquitination at the same site, resulting in protein stabilization.</text>
</comment>
<comment type="PTM">
    <text evidence="2">Oxidized at Cys-215 in differentiated myotubes, preventing ubiquitination at the same site, and resulting in protein stabilization.</text>
</comment>
<comment type="similarity">
    <text evidence="4">Belongs to the INSIG family.</text>
</comment>
<sequence length="225" mass="24791">MAEGETKSPGPKKCGPYISSVTSQSVNLMIRGVVLFFIGVFLALVLNLLQIQRNVTLFPPDVIASIFSSAWWVPPCCGTASAVIGLLYPCIDRHLGEPHKFKREWSSVMRCVAVFVGINHASAKVDFDNNIQLSLTLAALSIGLWWTFDRSRSGFGLGVGIAFLATLVTQLLVYNGVYQYTSPDFLYVRSWLPCIFFAGGITMGNIGRQLAMYECKVIAEKSHQE</sequence>